<gene>
    <name evidence="1" type="primary">aroE</name>
    <name type="ordered locus">mma_2962</name>
</gene>
<comment type="function">
    <text evidence="1">Involved in the biosynthesis of the chorismate, which leads to the biosynthesis of aromatic amino acids. Catalyzes the reversible NADPH linked reduction of 3-dehydroshikimate (DHSA) to yield shikimate (SA).</text>
</comment>
<comment type="catalytic activity">
    <reaction evidence="1">
        <text>shikimate + NADP(+) = 3-dehydroshikimate + NADPH + H(+)</text>
        <dbReference type="Rhea" id="RHEA:17737"/>
        <dbReference type="ChEBI" id="CHEBI:15378"/>
        <dbReference type="ChEBI" id="CHEBI:16630"/>
        <dbReference type="ChEBI" id="CHEBI:36208"/>
        <dbReference type="ChEBI" id="CHEBI:57783"/>
        <dbReference type="ChEBI" id="CHEBI:58349"/>
        <dbReference type="EC" id="1.1.1.25"/>
    </reaction>
</comment>
<comment type="pathway">
    <text evidence="1">Metabolic intermediate biosynthesis; chorismate biosynthesis; chorismate from D-erythrose 4-phosphate and phosphoenolpyruvate: step 4/7.</text>
</comment>
<comment type="subunit">
    <text evidence="1">Homodimer.</text>
</comment>
<comment type="similarity">
    <text evidence="1">Belongs to the shikimate dehydrogenase family.</text>
</comment>
<organism>
    <name type="scientific">Janthinobacterium sp. (strain Marseille)</name>
    <name type="common">Minibacterium massiliensis</name>
    <dbReference type="NCBI Taxonomy" id="375286"/>
    <lineage>
        <taxon>Bacteria</taxon>
        <taxon>Pseudomonadati</taxon>
        <taxon>Pseudomonadota</taxon>
        <taxon>Betaproteobacteria</taxon>
        <taxon>Burkholderiales</taxon>
        <taxon>Oxalobacteraceae</taxon>
        <taxon>Janthinobacterium</taxon>
    </lineage>
</organism>
<evidence type="ECO:0000255" key="1">
    <source>
        <dbReference type="HAMAP-Rule" id="MF_00222"/>
    </source>
</evidence>
<reference key="1">
    <citation type="journal article" date="2007" name="PLoS Genet.">
        <title>Genome analysis of Minibacterium massiliensis highlights the convergent evolution of water-living bacteria.</title>
        <authorList>
            <person name="Audic S."/>
            <person name="Robert C."/>
            <person name="Campagna B."/>
            <person name="Parinello H."/>
            <person name="Claverie J.-M."/>
            <person name="Raoult D."/>
            <person name="Drancourt M."/>
        </authorList>
    </citation>
    <scope>NUCLEOTIDE SEQUENCE [LARGE SCALE GENOMIC DNA]</scope>
    <source>
        <strain>Marseille</strain>
    </source>
</reference>
<sequence>MSTRTDHYAVIGNPIAHSKSPDIHARFAAQTQQDLKYDRLLAPLDGFLASVQEFIRNDGKGLNVTVPFKLEAYAMASRLSERARAAGAVNTLKFENGEMLGDNTDGVGLVTDIVRNAGVAVAGKTVLLLGAGGAARGVILPLLHEKPARLVIANRTHSKALDLAERFAPQPTLEVSDFGALDDAFDIVINATAASLASEVPPISPRVFAKRTLAYDMMYGAAPTPFMQFAAEHGATVRDGLGMLVEQAAESFYVWRNVRPETAAVFKELRDKL</sequence>
<name>AROE_JANMA</name>
<keyword id="KW-0028">Amino-acid biosynthesis</keyword>
<keyword id="KW-0057">Aromatic amino acid biosynthesis</keyword>
<keyword id="KW-0521">NADP</keyword>
<keyword id="KW-0560">Oxidoreductase</keyword>
<protein>
    <recommendedName>
        <fullName evidence="1">Shikimate dehydrogenase (NADP(+))</fullName>
        <shortName evidence="1">SDH</shortName>
        <ecNumber evidence="1">1.1.1.25</ecNumber>
    </recommendedName>
</protein>
<accession>A6T2A5</accession>
<proteinExistence type="inferred from homology"/>
<dbReference type="EC" id="1.1.1.25" evidence="1"/>
<dbReference type="EMBL" id="CP000269">
    <property type="protein sequence ID" value="ABR88541.1"/>
    <property type="molecule type" value="Genomic_DNA"/>
</dbReference>
<dbReference type="RefSeq" id="WP_012080811.1">
    <property type="nucleotide sequence ID" value="NC_009659.1"/>
</dbReference>
<dbReference type="SMR" id="A6T2A5"/>
<dbReference type="STRING" id="375286.mma_2962"/>
<dbReference type="KEGG" id="mms:mma_2962"/>
<dbReference type="eggNOG" id="COG0169">
    <property type="taxonomic scope" value="Bacteria"/>
</dbReference>
<dbReference type="HOGENOM" id="CLU_044063_2_1_4"/>
<dbReference type="OrthoDB" id="9776868at2"/>
<dbReference type="UniPathway" id="UPA00053">
    <property type="reaction ID" value="UER00087"/>
</dbReference>
<dbReference type="Proteomes" id="UP000006388">
    <property type="component" value="Chromosome"/>
</dbReference>
<dbReference type="GO" id="GO:0005829">
    <property type="term" value="C:cytosol"/>
    <property type="evidence" value="ECO:0007669"/>
    <property type="project" value="TreeGrafter"/>
</dbReference>
<dbReference type="GO" id="GO:0050661">
    <property type="term" value="F:NADP binding"/>
    <property type="evidence" value="ECO:0007669"/>
    <property type="project" value="InterPro"/>
</dbReference>
<dbReference type="GO" id="GO:0004764">
    <property type="term" value="F:shikimate 3-dehydrogenase (NADP+) activity"/>
    <property type="evidence" value="ECO:0007669"/>
    <property type="project" value="UniProtKB-UniRule"/>
</dbReference>
<dbReference type="GO" id="GO:0008652">
    <property type="term" value="P:amino acid biosynthetic process"/>
    <property type="evidence" value="ECO:0007669"/>
    <property type="project" value="UniProtKB-KW"/>
</dbReference>
<dbReference type="GO" id="GO:0009073">
    <property type="term" value="P:aromatic amino acid family biosynthetic process"/>
    <property type="evidence" value="ECO:0007669"/>
    <property type="project" value="UniProtKB-KW"/>
</dbReference>
<dbReference type="GO" id="GO:0009423">
    <property type="term" value="P:chorismate biosynthetic process"/>
    <property type="evidence" value="ECO:0007669"/>
    <property type="project" value="UniProtKB-UniRule"/>
</dbReference>
<dbReference type="GO" id="GO:0019632">
    <property type="term" value="P:shikimate metabolic process"/>
    <property type="evidence" value="ECO:0007669"/>
    <property type="project" value="InterPro"/>
</dbReference>
<dbReference type="CDD" id="cd01065">
    <property type="entry name" value="NAD_bind_Shikimate_DH"/>
    <property type="match status" value="1"/>
</dbReference>
<dbReference type="FunFam" id="3.40.50.10860:FF:000006">
    <property type="entry name" value="Shikimate dehydrogenase (NADP(+))"/>
    <property type="match status" value="1"/>
</dbReference>
<dbReference type="Gene3D" id="3.40.50.10860">
    <property type="entry name" value="Leucine Dehydrogenase, chain A, domain 1"/>
    <property type="match status" value="1"/>
</dbReference>
<dbReference type="Gene3D" id="3.40.50.720">
    <property type="entry name" value="NAD(P)-binding Rossmann-like Domain"/>
    <property type="match status" value="1"/>
</dbReference>
<dbReference type="HAMAP" id="MF_00222">
    <property type="entry name" value="Shikimate_DH_AroE"/>
    <property type="match status" value="1"/>
</dbReference>
<dbReference type="InterPro" id="IPR046346">
    <property type="entry name" value="Aminoacid_DH-like_N_sf"/>
</dbReference>
<dbReference type="InterPro" id="IPR036291">
    <property type="entry name" value="NAD(P)-bd_dom_sf"/>
</dbReference>
<dbReference type="InterPro" id="IPR041121">
    <property type="entry name" value="SDH_C"/>
</dbReference>
<dbReference type="InterPro" id="IPR011342">
    <property type="entry name" value="Shikimate_DH"/>
</dbReference>
<dbReference type="InterPro" id="IPR013708">
    <property type="entry name" value="Shikimate_DH-bd_N"/>
</dbReference>
<dbReference type="InterPro" id="IPR022893">
    <property type="entry name" value="Shikimate_DH_fam"/>
</dbReference>
<dbReference type="InterPro" id="IPR006151">
    <property type="entry name" value="Shikm_DH/Glu-tRNA_Rdtase"/>
</dbReference>
<dbReference type="NCBIfam" id="TIGR00507">
    <property type="entry name" value="aroE"/>
    <property type="match status" value="1"/>
</dbReference>
<dbReference type="NCBIfam" id="NF001310">
    <property type="entry name" value="PRK00258.1-2"/>
    <property type="match status" value="1"/>
</dbReference>
<dbReference type="PANTHER" id="PTHR21089:SF1">
    <property type="entry name" value="BIFUNCTIONAL 3-DEHYDROQUINATE DEHYDRATASE_SHIKIMATE DEHYDROGENASE, CHLOROPLASTIC"/>
    <property type="match status" value="1"/>
</dbReference>
<dbReference type="PANTHER" id="PTHR21089">
    <property type="entry name" value="SHIKIMATE DEHYDROGENASE"/>
    <property type="match status" value="1"/>
</dbReference>
<dbReference type="Pfam" id="PF18317">
    <property type="entry name" value="SDH_C"/>
    <property type="match status" value="1"/>
</dbReference>
<dbReference type="Pfam" id="PF01488">
    <property type="entry name" value="Shikimate_DH"/>
    <property type="match status" value="1"/>
</dbReference>
<dbReference type="Pfam" id="PF08501">
    <property type="entry name" value="Shikimate_dh_N"/>
    <property type="match status" value="1"/>
</dbReference>
<dbReference type="SUPFAM" id="SSF53223">
    <property type="entry name" value="Aminoacid dehydrogenase-like, N-terminal domain"/>
    <property type="match status" value="1"/>
</dbReference>
<dbReference type="SUPFAM" id="SSF51735">
    <property type="entry name" value="NAD(P)-binding Rossmann-fold domains"/>
    <property type="match status" value="1"/>
</dbReference>
<feature type="chain" id="PRO_0000325127" description="Shikimate dehydrogenase (NADP(+))">
    <location>
        <begin position="1"/>
        <end position="273"/>
    </location>
</feature>
<feature type="active site" description="Proton acceptor" evidence="1">
    <location>
        <position position="69"/>
    </location>
</feature>
<feature type="binding site" evidence="1">
    <location>
        <begin position="18"/>
        <end position="20"/>
    </location>
    <ligand>
        <name>shikimate</name>
        <dbReference type="ChEBI" id="CHEBI:36208"/>
    </ligand>
</feature>
<feature type="binding site" evidence="1">
    <location>
        <position position="65"/>
    </location>
    <ligand>
        <name>shikimate</name>
        <dbReference type="ChEBI" id="CHEBI:36208"/>
    </ligand>
</feature>
<feature type="binding site" evidence="1">
    <location>
        <position position="81"/>
    </location>
    <ligand>
        <name>NADP(+)</name>
        <dbReference type="ChEBI" id="CHEBI:58349"/>
    </ligand>
</feature>
<feature type="binding site" evidence="1">
    <location>
        <position position="90"/>
    </location>
    <ligand>
        <name>shikimate</name>
        <dbReference type="ChEBI" id="CHEBI:36208"/>
    </ligand>
</feature>
<feature type="binding site" evidence="1">
    <location>
        <position position="105"/>
    </location>
    <ligand>
        <name>shikimate</name>
        <dbReference type="ChEBI" id="CHEBI:36208"/>
    </ligand>
</feature>
<feature type="binding site" evidence="1">
    <location>
        <begin position="130"/>
        <end position="134"/>
    </location>
    <ligand>
        <name>NADP(+)</name>
        <dbReference type="ChEBI" id="CHEBI:58349"/>
    </ligand>
</feature>
<feature type="binding site" evidence="1">
    <location>
        <begin position="154"/>
        <end position="159"/>
    </location>
    <ligand>
        <name>NADP(+)</name>
        <dbReference type="ChEBI" id="CHEBI:58349"/>
    </ligand>
</feature>
<feature type="binding site" evidence="1">
    <location>
        <position position="217"/>
    </location>
    <ligand>
        <name>NADP(+)</name>
        <dbReference type="ChEBI" id="CHEBI:58349"/>
    </ligand>
</feature>
<feature type="binding site" evidence="1">
    <location>
        <position position="219"/>
    </location>
    <ligand>
        <name>shikimate</name>
        <dbReference type="ChEBI" id="CHEBI:36208"/>
    </ligand>
</feature>
<feature type="binding site" evidence="1">
    <location>
        <position position="240"/>
    </location>
    <ligand>
        <name>NADP(+)</name>
        <dbReference type="ChEBI" id="CHEBI:58349"/>
    </ligand>
</feature>